<sequence>MQLSVLIASVLAAGAAVDAASYTPQNVSCPDNANFIRNAADGLSPAEKEWLKKRDPITRDALQTFLRRAFANVSTEITSALFNDTENVPKLGIAVAGGGYRAMFVGAGAFAAMDNRTDGANEHGLGGLLQAATYMAGLSGGNWLTGTLAYNNFTSVQQILEEGDKADAIWNITNSFLNPYDKDFSKTLARWTAIGSQVQGKRDAGFNVTITDLWSRALAYGWFPTLPNAGAGLTWSSLRDNEIFMNGEMPMPISVADGRYPGTTVINLNATVFEMTPFEIGSWDPSLNAFSDIKYLGTQVTDGKPETERCINGFDDASFIMGTSSSLFNEFTMSNDSAVAYTYLNTLSSTLVKGIDKENNDIAMYAPNPFKGSKYVDSNYTTSIVDSDSLFLVDGGEDLQGIPFVPLLKQERDLDIIFAIDVDTETSDNYPAGGPMMKTYERQFSKQGKGMAFPYVPDMTTFVNLGLGGKPSFYGCDANNLTDLEYIPPLIVYIPNSYHSFESNVSTFKLNYNYSERVGMIRNAFEATTRNNLTEDADYVTCVGCAIIRRKQQSLNLTLPDICDKCFTNYCWNGTIDNTPTKLLTPNNQDPAAISSAIAAVTDDSPIGALLNTGSGTKSNSSSKTNSTLVTSSRATSTGTLISNSSSNSTVSSTAARSSTSSTAKKNAGSVLKLEFSKSASVMVAIAAAAVASLI</sequence>
<evidence type="ECO:0000250" key="1">
    <source>
        <dbReference type="UniProtKB" id="P39105"/>
    </source>
</evidence>
<evidence type="ECO:0000250" key="2">
    <source>
        <dbReference type="UniProtKB" id="P78854"/>
    </source>
</evidence>
<evidence type="ECO:0000250" key="3">
    <source>
        <dbReference type="UniProtKB" id="Q9UWF6"/>
    </source>
</evidence>
<evidence type="ECO:0000255" key="4"/>
<evidence type="ECO:0000255" key="5">
    <source>
        <dbReference type="PROSITE-ProRule" id="PRU00555"/>
    </source>
</evidence>
<evidence type="ECO:0000256" key="6">
    <source>
        <dbReference type="SAM" id="MobiDB-lite"/>
    </source>
</evidence>
<evidence type="ECO:0000269" key="7">
    <source>
    </source>
</evidence>
<evidence type="ECO:0000269" key="8">
    <source>
    </source>
</evidence>
<evidence type="ECO:0000303" key="9">
    <source ref="1"/>
</evidence>
<evidence type="ECO:0000305" key="10"/>
<gene>
    <name evidence="9" type="primary">PLB2</name>
    <name type="ordered locus">CAGL0J11748g</name>
</gene>
<keyword id="KW-0134">Cell wall</keyword>
<keyword id="KW-0903">Direct protein sequencing</keyword>
<keyword id="KW-0325">Glycoprotein</keyword>
<keyword id="KW-0378">Hydrolase</keyword>
<keyword id="KW-0442">Lipid degradation</keyword>
<keyword id="KW-0443">Lipid metabolism</keyword>
<keyword id="KW-1185">Reference proteome</keyword>
<keyword id="KW-0964">Secreted</keyword>
<keyword id="KW-0732">Signal</keyword>
<protein>
    <recommendedName>
        <fullName>Lysophospholipase 2</fullName>
        <ecNumber evidence="1">3.1.1.5</ecNumber>
    </recommendedName>
    <alternativeName>
        <fullName evidence="9">Phospholipase B 2</fullName>
    </alternativeName>
</protein>
<reference key="1">
    <citation type="submission" date="2002-04" db="EMBL/GenBank/DDBJ databases">
        <title>Cloning and characterization of phospholipase B gene (PLB2) of Candida glabrata.</title>
        <authorList>
            <person name="Clancy C."/>
            <person name="Cheng S."/>
            <person name="Chekley M.A."/>
            <person name="Lewin A."/>
            <person name="Nguyen M.-H."/>
        </authorList>
    </citation>
    <scope>NUCLEOTIDE SEQUENCE [GENOMIC DNA]</scope>
</reference>
<reference key="2">
    <citation type="journal article" date="2004" name="Nature">
        <title>Genome evolution in yeasts.</title>
        <authorList>
            <person name="Dujon B."/>
            <person name="Sherman D."/>
            <person name="Fischer G."/>
            <person name="Durrens P."/>
            <person name="Casaregola S."/>
            <person name="Lafontaine I."/>
            <person name="de Montigny J."/>
            <person name="Marck C."/>
            <person name="Neuveglise C."/>
            <person name="Talla E."/>
            <person name="Goffard N."/>
            <person name="Frangeul L."/>
            <person name="Aigle M."/>
            <person name="Anthouard V."/>
            <person name="Babour A."/>
            <person name="Barbe V."/>
            <person name="Barnay S."/>
            <person name="Blanchin S."/>
            <person name="Beckerich J.-M."/>
            <person name="Beyne E."/>
            <person name="Bleykasten C."/>
            <person name="Boisrame A."/>
            <person name="Boyer J."/>
            <person name="Cattolico L."/>
            <person name="Confanioleri F."/>
            <person name="de Daruvar A."/>
            <person name="Despons L."/>
            <person name="Fabre E."/>
            <person name="Fairhead C."/>
            <person name="Ferry-Dumazet H."/>
            <person name="Groppi A."/>
            <person name="Hantraye F."/>
            <person name="Hennequin C."/>
            <person name="Jauniaux N."/>
            <person name="Joyet P."/>
            <person name="Kachouri R."/>
            <person name="Kerrest A."/>
            <person name="Koszul R."/>
            <person name="Lemaire M."/>
            <person name="Lesur I."/>
            <person name="Ma L."/>
            <person name="Muller H."/>
            <person name="Nicaud J.-M."/>
            <person name="Nikolski M."/>
            <person name="Oztas S."/>
            <person name="Ozier-Kalogeropoulos O."/>
            <person name="Pellenz S."/>
            <person name="Potier S."/>
            <person name="Richard G.-F."/>
            <person name="Straub M.-L."/>
            <person name="Suleau A."/>
            <person name="Swennen D."/>
            <person name="Tekaia F."/>
            <person name="Wesolowski-Louvel M."/>
            <person name="Westhof E."/>
            <person name="Wirth B."/>
            <person name="Zeniou-Meyer M."/>
            <person name="Zivanovic Y."/>
            <person name="Bolotin-Fukuhara M."/>
            <person name="Thierry A."/>
            <person name="Bouchier C."/>
            <person name="Caudron B."/>
            <person name="Scarpelli C."/>
            <person name="Gaillardin C."/>
            <person name="Weissenbach J."/>
            <person name="Wincker P."/>
            <person name="Souciet J.-L."/>
        </authorList>
    </citation>
    <scope>NUCLEOTIDE SEQUENCE [LARGE SCALE GENOMIC DNA]</scope>
    <source>
        <strain>ATCC 2001 / BCRC 20586 / JCM 3761 / NBRC 0622 / NRRL Y-65 / CBS 138</strain>
    </source>
</reference>
<reference key="3">
    <citation type="journal article" date="2015" name="FEMS Yeast Res.">
        <title>Proteomic analysis of hyperadhesive Candida glabrata clinical isolates reveals a core wall proteome and differential incorporation of adhesins.</title>
        <authorList>
            <person name="Gomez-Molero E."/>
            <person name="de Boer A.D."/>
            <person name="Dekker H.L."/>
            <person name="Moreno-Martinez A."/>
            <person name="Kraneveld E.A."/>
            <person name="Ichsan I."/>
            <person name="Chauhan N."/>
            <person name="Weig M."/>
            <person name="de Soet J.J."/>
            <person name="de Koster C.G."/>
            <person name="Bader O."/>
            <person name="de Groot P.W."/>
        </authorList>
    </citation>
    <scope>PROTEIN SEQUENCE OF 38-48; 191-201 AND 279-309</scope>
    <scope>IDENTIFICATION BY MASS SPECTROMETRY</scope>
    <scope>SUBCELLULAR LOCATION</scope>
</reference>
<reference key="4">
    <citation type="journal article" date="2008" name="Eukaryot. Cell">
        <title>The cell wall of the human pathogen Candida glabrata: differential incorporation of novel adhesin-like wall proteins.</title>
        <authorList>
            <person name="de Groot P.W."/>
            <person name="Kraneveld E.A."/>
            <person name="Yin Q.Y."/>
            <person name="Dekker H.L."/>
            <person name="Gross U."/>
            <person name="Crielaard W."/>
            <person name="de Koster C.G."/>
            <person name="Bader O."/>
            <person name="Klis F.M."/>
            <person name="Weig M."/>
        </authorList>
    </citation>
    <scope>PROTEIN SEQUENCE OF 91-101; 191-201; 295-309 AND 510-517</scope>
    <scope>IDENTIFICATION BY MASS SPECTROMETRY</scope>
    <scope>SUBCELLULAR LOCATION</scope>
</reference>
<dbReference type="EC" id="3.1.1.5" evidence="1"/>
<dbReference type="EMBL" id="AF498582">
    <property type="protein sequence ID" value="AAM19335.1"/>
    <property type="molecule type" value="Genomic_DNA"/>
</dbReference>
<dbReference type="EMBL" id="CR380956">
    <property type="protein sequence ID" value="CAG61175.1"/>
    <property type="molecule type" value="Genomic_DNA"/>
</dbReference>
<dbReference type="RefSeq" id="XP_448224.1">
    <property type="nucleotide sequence ID" value="XM_448224.1"/>
</dbReference>
<dbReference type="SMR" id="Q8TG06"/>
<dbReference type="STRING" id="284593.Q8TG06"/>
<dbReference type="GlyCosmos" id="Q8TG06">
    <property type="glycosylation" value="20 sites, No reported glycans"/>
</dbReference>
<dbReference type="EnsemblFungi" id="CAGL0J11748g-T">
    <property type="protein sequence ID" value="CAGL0J11748g-T-p1"/>
    <property type="gene ID" value="CAGL0J11748g"/>
</dbReference>
<dbReference type="GeneID" id="2889464"/>
<dbReference type="KEGG" id="cgr:2889464"/>
<dbReference type="CGD" id="CAL0133296">
    <property type="gene designation" value="PLB2"/>
</dbReference>
<dbReference type="VEuPathDB" id="FungiDB:B1J91_J11748g"/>
<dbReference type="VEuPathDB" id="FungiDB:CAGL0J11748g"/>
<dbReference type="eggNOG" id="KOG1325">
    <property type="taxonomic scope" value="Eukaryota"/>
</dbReference>
<dbReference type="HOGENOM" id="CLU_014602_0_0_1"/>
<dbReference type="InParanoid" id="Q8TG06"/>
<dbReference type="OMA" id="TEDANWP"/>
<dbReference type="PHI-base" id="PHI:3601"/>
<dbReference type="Proteomes" id="UP000002428">
    <property type="component" value="Chromosome J"/>
</dbReference>
<dbReference type="GO" id="GO:0005829">
    <property type="term" value="C:cytosol"/>
    <property type="evidence" value="ECO:0007669"/>
    <property type="project" value="TreeGrafter"/>
</dbReference>
<dbReference type="GO" id="GO:0005783">
    <property type="term" value="C:endoplasmic reticulum"/>
    <property type="evidence" value="ECO:0007669"/>
    <property type="project" value="TreeGrafter"/>
</dbReference>
<dbReference type="GO" id="GO:0005576">
    <property type="term" value="C:extracellular region"/>
    <property type="evidence" value="ECO:0000314"/>
    <property type="project" value="CGD"/>
</dbReference>
<dbReference type="GO" id="GO:0009277">
    <property type="term" value="C:fungal-type cell wall"/>
    <property type="evidence" value="ECO:0000314"/>
    <property type="project" value="UniProtKB"/>
</dbReference>
<dbReference type="GO" id="GO:0005886">
    <property type="term" value="C:plasma membrane"/>
    <property type="evidence" value="ECO:0007669"/>
    <property type="project" value="TreeGrafter"/>
</dbReference>
<dbReference type="GO" id="GO:0004622">
    <property type="term" value="F:lysophospholipase activity"/>
    <property type="evidence" value="ECO:0007669"/>
    <property type="project" value="UniProtKB-EC"/>
</dbReference>
<dbReference type="GO" id="GO:0004623">
    <property type="term" value="F:phospholipase A2 activity"/>
    <property type="evidence" value="ECO:0007669"/>
    <property type="project" value="TreeGrafter"/>
</dbReference>
<dbReference type="GO" id="GO:0046475">
    <property type="term" value="P:glycerophospholipid catabolic process"/>
    <property type="evidence" value="ECO:0007669"/>
    <property type="project" value="TreeGrafter"/>
</dbReference>
<dbReference type="CDD" id="cd07203">
    <property type="entry name" value="cPLA2_Fungal_PLB"/>
    <property type="match status" value="1"/>
</dbReference>
<dbReference type="FunFam" id="3.40.1090.10:FF:000010">
    <property type="entry name" value="Lysophospholipase"/>
    <property type="match status" value="1"/>
</dbReference>
<dbReference type="Gene3D" id="3.40.1090.10">
    <property type="entry name" value="Cytosolic phospholipase A2 catalytic domain"/>
    <property type="match status" value="1"/>
</dbReference>
<dbReference type="InterPro" id="IPR016035">
    <property type="entry name" value="Acyl_Trfase/lysoPLipase"/>
</dbReference>
<dbReference type="InterPro" id="IPR002642">
    <property type="entry name" value="LysoPLipase_cat_dom"/>
</dbReference>
<dbReference type="PANTHER" id="PTHR10728">
    <property type="entry name" value="CYTOSOLIC PHOSPHOLIPASE A2"/>
    <property type="match status" value="1"/>
</dbReference>
<dbReference type="PANTHER" id="PTHR10728:SF33">
    <property type="entry name" value="LYSOPHOSPHOLIPASE 1-RELATED"/>
    <property type="match status" value="1"/>
</dbReference>
<dbReference type="Pfam" id="PF01735">
    <property type="entry name" value="PLA2_B"/>
    <property type="match status" value="1"/>
</dbReference>
<dbReference type="SMART" id="SM00022">
    <property type="entry name" value="PLAc"/>
    <property type="match status" value="1"/>
</dbReference>
<dbReference type="SUPFAM" id="SSF52151">
    <property type="entry name" value="FabD/lysophospholipase-like"/>
    <property type="match status" value="1"/>
</dbReference>
<dbReference type="PROSITE" id="PS51210">
    <property type="entry name" value="PLA2C"/>
    <property type="match status" value="1"/>
</dbReference>
<accession>Q8TG06</accession>
<accession>Q6FNH0</accession>
<organism>
    <name type="scientific">Candida glabrata (strain ATCC 2001 / BCRC 20586 / JCM 3761 / NBRC 0622 / NRRL Y-65 / CBS 138)</name>
    <name type="common">Yeast</name>
    <name type="synonym">Nakaseomyces glabratus</name>
    <dbReference type="NCBI Taxonomy" id="284593"/>
    <lineage>
        <taxon>Eukaryota</taxon>
        <taxon>Fungi</taxon>
        <taxon>Dikarya</taxon>
        <taxon>Ascomycota</taxon>
        <taxon>Saccharomycotina</taxon>
        <taxon>Saccharomycetes</taxon>
        <taxon>Saccharomycetales</taxon>
        <taxon>Saccharomycetaceae</taxon>
        <taxon>Nakaseomyces</taxon>
    </lineage>
</organism>
<name>PLB2_CANGA</name>
<feature type="signal peptide" evidence="4">
    <location>
        <begin position="1"/>
        <end position="19"/>
    </location>
</feature>
<feature type="chain" id="PRO_0000024634" description="Lysophospholipase 2">
    <location>
        <begin position="20"/>
        <end position="695"/>
    </location>
</feature>
<feature type="domain" description="PLA2c" evidence="5">
    <location>
        <begin position="28"/>
        <end position="577"/>
    </location>
</feature>
<feature type="region of interest" description="Disordered" evidence="6">
    <location>
        <begin position="612"/>
        <end position="662"/>
    </location>
</feature>
<feature type="glycosylation site" description="N-linked (GlcNAc...) asparagine" evidence="4">
    <location>
        <position position="26"/>
    </location>
</feature>
<feature type="glycosylation site" description="N-linked (GlcNAc...) asparagine" evidence="4">
    <location>
        <position position="72"/>
    </location>
</feature>
<feature type="glycosylation site" description="N-linked (GlcNAc...) asparagine" evidence="4">
    <location>
        <position position="83"/>
    </location>
</feature>
<feature type="glycosylation site" description="N-linked (GlcNAc...) asparagine" evidence="4">
    <location>
        <position position="115"/>
    </location>
</feature>
<feature type="glycosylation site" description="N-linked (GlcNAc...) asparagine" evidence="4">
    <location>
        <position position="152"/>
    </location>
</feature>
<feature type="glycosylation site" description="N-linked (GlcNAc...) asparagine" evidence="4">
    <location>
        <position position="171"/>
    </location>
</feature>
<feature type="glycosylation site" description="N-linked (GlcNAc...) asparagine" evidence="4">
    <location>
        <position position="207"/>
    </location>
</feature>
<feature type="glycosylation site" description="N-linked (GlcNAc...) asparagine" evidence="4">
    <location>
        <position position="269"/>
    </location>
</feature>
<feature type="glycosylation site" description="N-linked (GlcNAc...) asparagine" evidence="4">
    <location>
        <position position="335"/>
    </location>
</feature>
<feature type="glycosylation site" description="N-linked (GlcNAc...) asparagine" evidence="4">
    <location>
        <position position="379"/>
    </location>
</feature>
<feature type="glycosylation site" description="N-linked (GlcNAc...) asparagine" evidence="4">
    <location>
        <position position="480"/>
    </location>
</feature>
<feature type="glycosylation site" description="N-linked (GlcNAc...) asparagine" evidence="4">
    <location>
        <position position="504"/>
    </location>
</feature>
<feature type="glycosylation site" description="N-linked (GlcNAc...) asparagine" evidence="4">
    <location>
        <position position="513"/>
    </location>
</feature>
<feature type="glycosylation site" description="N-linked (GlcNAc...) asparagine" evidence="4">
    <location>
        <position position="532"/>
    </location>
</feature>
<feature type="glycosylation site" description="N-linked (GlcNAc...) asparagine" evidence="4">
    <location>
        <position position="556"/>
    </location>
</feature>
<feature type="glycosylation site" description="N-linked (GlcNAc...) asparagine" evidence="4">
    <location>
        <position position="573"/>
    </location>
</feature>
<feature type="glycosylation site" description="N-linked (GlcNAc...) asparagine" evidence="4">
    <location>
        <position position="620"/>
    </location>
</feature>
<feature type="glycosylation site" description="N-linked (GlcNAc...) asparagine" evidence="4">
    <location>
        <position position="626"/>
    </location>
</feature>
<feature type="glycosylation site" description="N-linked (GlcNAc...) asparagine" evidence="4">
    <location>
        <position position="644"/>
    </location>
</feature>
<feature type="glycosylation site" description="N-linked (GlcNAc...) asparagine" evidence="4">
    <location>
        <position position="648"/>
    </location>
</feature>
<feature type="sequence conflict" description="In Ref. 1; AAM19335." evidence="10" ref="1">
    <original>S</original>
    <variation>P</variation>
    <location>
        <position position="254"/>
    </location>
</feature>
<proteinExistence type="evidence at protein level"/>
<comment type="function">
    <text evidence="2 3">Catalyzes the release of fatty acids from lysophospholipids (By similarity). Phospholipase B may well contribute to pathogenicity by abetting the fungus in damaging and traversing host cell membranes, processes which likely increase the rapidity of disseminated infection (By similarity).</text>
</comment>
<comment type="catalytic activity">
    <reaction evidence="1">
        <text>a 1-acyl-sn-glycero-3-phosphocholine + H2O = sn-glycerol 3-phosphocholine + a fatty acid + H(+)</text>
        <dbReference type="Rhea" id="RHEA:15177"/>
        <dbReference type="ChEBI" id="CHEBI:15377"/>
        <dbReference type="ChEBI" id="CHEBI:15378"/>
        <dbReference type="ChEBI" id="CHEBI:16870"/>
        <dbReference type="ChEBI" id="CHEBI:28868"/>
        <dbReference type="ChEBI" id="CHEBI:58168"/>
        <dbReference type="EC" id="3.1.1.5"/>
    </reaction>
</comment>
<comment type="subcellular location">
    <subcellularLocation>
        <location evidence="10">Secreted</location>
    </subcellularLocation>
    <subcellularLocation>
        <location evidence="7 8">Secreted</location>
        <location evidence="7 8">Cell wall</location>
    </subcellularLocation>
</comment>
<comment type="similarity">
    <text evidence="10">Belongs to the lysophospholipase family.</text>
</comment>